<organism>
    <name type="scientific">Bacillus subtilis (strain 168)</name>
    <dbReference type="NCBI Taxonomy" id="224308"/>
    <lineage>
        <taxon>Bacteria</taxon>
        <taxon>Bacillati</taxon>
        <taxon>Bacillota</taxon>
        <taxon>Bacilli</taxon>
        <taxon>Bacillales</taxon>
        <taxon>Bacillaceae</taxon>
        <taxon>Bacillus</taxon>
    </lineage>
</organism>
<name>ARAE_BACSU</name>
<gene>
    <name type="primary">araE</name>
    <name type="synonym">yvbR</name>
    <name type="ordered locus">BSU33960</name>
</gene>
<proteinExistence type="evidence at protein level"/>
<keyword id="KW-1003">Cell membrane</keyword>
<keyword id="KW-0472">Membrane</keyword>
<keyword id="KW-1185">Reference proteome</keyword>
<keyword id="KW-0762">Sugar transport</keyword>
<keyword id="KW-0769">Symport</keyword>
<keyword id="KW-0812">Transmembrane</keyword>
<keyword id="KW-1133">Transmembrane helix</keyword>
<keyword id="KW-0813">Transport</keyword>
<accession>P96710</accession>
<feature type="chain" id="PRO_0000050288" description="Arabinose-proton symporter">
    <location>
        <begin position="1"/>
        <end position="464"/>
    </location>
</feature>
<feature type="transmembrane region" description="Helical" evidence="1">
    <location>
        <begin position="21"/>
        <end position="43"/>
    </location>
</feature>
<feature type="transmembrane region" description="Helical" evidence="1">
    <location>
        <begin position="63"/>
        <end position="85"/>
    </location>
</feature>
<feature type="transmembrane region" description="Helical" evidence="1">
    <location>
        <begin position="92"/>
        <end position="111"/>
    </location>
</feature>
<feature type="transmembrane region" description="Helical" evidence="1">
    <location>
        <begin position="116"/>
        <end position="138"/>
    </location>
</feature>
<feature type="transmembrane region" description="Helical" evidence="1">
    <location>
        <begin position="150"/>
        <end position="172"/>
    </location>
</feature>
<feature type="transmembrane region" description="Helical" evidence="1">
    <location>
        <begin position="185"/>
        <end position="207"/>
    </location>
</feature>
<feature type="transmembrane region" description="Helical" evidence="1">
    <location>
        <begin position="266"/>
        <end position="288"/>
    </location>
</feature>
<feature type="transmembrane region" description="Helical" evidence="1">
    <location>
        <begin position="303"/>
        <end position="325"/>
    </location>
</feature>
<feature type="transmembrane region" description="Helical" evidence="1">
    <location>
        <begin position="332"/>
        <end position="354"/>
    </location>
</feature>
<feature type="transmembrane region" description="Helical" evidence="1">
    <location>
        <begin position="364"/>
        <end position="386"/>
    </location>
</feature>
<feature type="transmembrane region" description="Helical" evidence="1">
    <location>
        <begin position="398"/>
        <end position="420"/>
    </location>
</feature>
<feature type="transmembrane region" description="Helical" evidence="1">
    <location>
        <begin position="424"/>
        <end position="446"/>
    </location>
</feature>
<dbReference type="EMBL" id="AL009126">
    <property type="protein sequence ID" value="CAB15401.1"/>
    <property type="molecule type" value="Genomic_DNA"/>
</dbReference>
<dbReference type="EMBL" id="X98354">
    <property type="protein sequence ID" value="CAA66998.1"/>
    <property type="molecule type" value="Genomic_DNA"/>
</dbReference>
<dbReference type="EMBL" id="Y12105">
    <property type="protein sequence ID" value="CAA72812.1"/>
    <property type="molecule type" value="Genomic_DNA"/>
</dbReference>
<dbReference type="PIR" id="F69587">
    <property type="entry name" value="F69587"/>
</dbReference>
<dbReference type="RefSeq" id="NP_391276.1">
    <property type="nucleotide sequence ID" value="NC_000964.3"/>
</dbReference>
<dbReference type="RefSeq" id="WP_003243899.1">
    <property type="nucleotide sequence ID" value="NZ_OZ025638.1"/>
</dbReference>
<dbReference type="SMR" id="P96710"/>
<dbReference type="FunCoup" id="P96710">
    <property type="interactions" value="457"/>
</dbReference>
<dbReference type="STRING" id="224308.BSU33960"/>
<dbReference type="TCDB" id="2.A.1.1.55">
    <property type="family name" value="the major facilitator superfamily (mfs)"/>
</dbReference>
<dbReference type="PaxDb" id="224308-BSU33960"/>
<dbReference type="EnsemblBacteria" id="CAB15401">
    <property type="protein sequence ID" value="CAB15401"/>
    <property type="gene ID" value="BSU_33960"/>
</dbReference>
<dbReference type="GeneID" id="938567"/>
<dbReference type="KEGG" id="bsu:BSU33960"/>
<dbReference type="PATRIC" id="fig|224308.179.peg.3682"/>
<dbReference type="eggNOG" id="COG2814">
    <property type="taxonomic scope" value="Bacteria"/>
</dbReference>
<dbReference type="InParanoid" id="P96710"/>
<dbReference type="OrthoDB" id="9783823at2"/>
<dbReference type="PhylomeDB" id="P96710"/>
<dbReference type="BioCyc" id="BSUB:BSU33960-MONOMER"/>
<dbReference type="Proteomes" id="UP000001570">
    <property type="component" value="Chromosome"/>
</dbReference>
<dbReference type="GO" id="GO:0016020">
    <property type="term" value="C:membrane"/>
    <property type="evidence" value="ECO:0000318"/>
    <property type="project" value="GO_Central"/>
</dbReference>
<dbReference type="GO" id="GO:0005886">
    <property type="term" value="C:plasma membrane"/>
    <property type="evidence" value="ECO:0007669"/>
    <property type="project" value="UniProtKB-SubCell"/>
</dbReference>
<dbReference type="GO" id="GO:0055056">
    <property type="term" value="F:D-glucose transmembrane transporter activity"/>
    <property type="evidence" value="ECO:0000318"/>
    <property type="project" value="GO_Central"/>
</dbReference>
<dbReference type="GO" id="GO:0015293">
    <property type="term" value="F:symporter activity"/>
    <property type="evidence" value="ECO:0007669"/>
    <property type="project" value="UniProtKB-KW"/>
</dbReference>
<dbReference type="GO" id="GO:1904659">
    <property type="term" value="P:D-glucose transmembrane transport"/>
    <property type="evidence" value="ECO:0000318"/>
    <property type="project" value="GO_Central"/>
</dbReference>
<dbReference type="CDD" id="cd17359">
    <property type="entry name" value="MFS_XylE_like"/>
    <property type="match status" value="1"/>
</dbReference>
<dbReference type="FunFam" id="1.20.1250.20:FF:000748">
    <property type="entry name" value="Arabinose-proton symporter"/>
    <property type="match status" value="1"/>
</dbReference>
<dbReference type="FunFam" id="1.20.1250.20:FF:000279">
    <property type="entry name" value="Major facilitator superfamily protein"/>
    <property type="match status" value="1"/>
</dbReference>
<dbReference type="Gene3D" id="1.20.1250.20">
    <property type="entry name" value="MFS general substrate transporter like domains"/>
    <property type="match status" value="2"/>
</dbReference>
<dbReference type="InterPro" id="IPR020846">
    <property type="entry name" value="MFS_dom"/>
</dbReference>
<dbReference type="InterPro" id="IPR005828">
    <property type="entry name" value="MFS_sugar_transport-like"/>
</dbReference>
<dbReference type="InterPro" id="IPR050820">
    <property type="entry name" value="MFS_Sugar_Transporter"/>
</dbReference>
<dbReference type="InterPro" id="IPR036259">
    <property type="entry name" value="MFS_trans_sf"/>
</dbReference>
<dbReference type="InterPro" id="IPR003663">
    <property type="entry name" value="Sugar/inositol_transpt"/>
</dbReference>
<dbReference type="InterPro" id="IPR005829">
    <property type="entry name" value="Sugar_transporter_CS"/>
</dbReference>
<dbReference type="InterPro" id="IPR047984">
    <property type="entry name" value="XylE-like"/>
</dbReference>
<dbReference type="NCBIfam" id="TIGR00879">
    <property type="entry name" value="SP"/>
    <property type="match status" value="1"/>
</dbReference>
<dbReference type="PANTHER" id="PTHR48023">
    <property type="entry name" value="D-XYLOSE-PROTON SYMPORTER-LIKE 2"/>
    <property type="match status" value="1"/>
</dbReference>
<dbReference type="PANTHER" id="PTHR48023:SF4">
    <property type="entry name" value="D-XYLOSE-PROTON SYMPORTER-LIKE 2"/>
    <property type="match status" value="1"/>
</dbReference>
<dbReference type="Pfam" id="PF00083">
    <property type="entry name" value="Sugar_tr"/>
    <property type="match status" value="1"/>
</dbReference>
<dbReference type="PRINTS" id="PR00171">
    <property type="entry name" value="SUGRTRNSPORT"/>
</dbReference>
<dbReference type="SUPFAM" id="SSF103473">
    <property type="entry name" value="MFS general substrate transporter"/>
    <property type="match status" value="1"/>
</dbReference>
<dbReference type="PROSITE" id="PS50850">
    <property type="entry name" value="MFS"/>
    <property type="match status" value="1"/>
</dbReference>
<dbReference type="PROSITE" id="PS00216">
    <property type="entry name" value="SUGAR_TRANSPORT_1"/>
    <property type="match status" value="2"/>
</dbReference>
<dbReference type="PROSITE" id="PS00217">
    <property type="entry name" value="SUGAR_TRANSPORT_2"/>
    <property type="match status" value="1"/>
</dbReference>
<reference key="1">
    <citation type="journal article" date="1997" name="Nature">
        <title>The complete genome sequence of the Gram-positive bacterium Bacillus subtilis.</title>
        <authorList>
            <person name="Kunst F."/>
            <person name="Ogasawara N."/>
            <person name="Moszer I."/>
            <person name="Albertini A.M."/>
            <person name="Alloni G."/>
            <person name="Azevedo V."/>
            <person name="Bertero M.G."/>
            <person name="Bessieres P."/>
            <person name="Bolotin A."/>
            <person name="Borchert S."/>
            <person name="Borriss R."/>
            <person name="Boursier L."/>
            <person name="Brans A."/>
            <person name="Braun M."/>
            <person name="Brignell S.C."/>
            <person name="Bron S."/>
            <person name="Brouillet S."/>
            <person name="Bruschi C.V."/>
            <person name="Caldwell B."/>
            <person name="Capuano V."/>
            <person name="Carter N.M."/>
            <person name="Choi S.-K."/>
            <person name="Codani J.-J."/>
            <person name="Connerton I.F."/>
            <person name="Cummings N.J."/>
            <person name="Daniel R.A."/>
            <person name="Denizot F."/>
            <person name="Devine K.M."/>
            <person name="Duesterhoeft A."/>
            <person name="Ehrlich S.D."/>
            <person name="Emmerson P.T."/>
            <person name="Entian K.-D."/>
            <person name="Errington J."/>
            <person name="Fabret C."/>
            <person name="Ferrari E."/>
            <person name="Foulger D."/>
            <person name="Fritz C."/>
            <person name="Fujita M."/>
            <person name="Fujita Y."/>
            <person name="Fuma S."/>
            <person name="Galizzi A."/>
            <person name="Galleron N."/>
            <person name="Ghim S.-Y."/>
            <person name="Glaser P."/>
            <person name="Goffeau A."/>
            <person name="Golightly E.J."/>
            <person name="Grandi G."/>
            <person name="Guiseppi G."/>
            <person name="Guy B.J."/>
            <person name="Haga K."/>
            <person name="Haiech J."/>
            <person name="Harwood C.R."/>
            <person name="Henaut A."/>
            <person name="Hilbert H."/>
            <person name="Holsappel S."/>
            <person name="Hosono S."/>
            <person name="Hullo M.-F."/>
            <person name="Itaya M."/>
            <person name="Jones L.-M."/>
            <person name="Joris B."/>
            <person name="Karamata D."/>
            <person name="Kasahara Y."/>
            <person name="Klaerr-Blanchard M."/>
            <person name="Klein C."/>
            <person name="Kobayashi Y."/>
            <person name="Koetter P."/>
            <person name="Koningstein G."/>
            <person name="Krogh S."/>
            <person name="Kumano M."/>
            <person name="Kurita K."/>
            <person name="Lapidus A."/>
            <person name="Lardinois S."/>
            <person name="Lauber J."/>
            <person name="Lazarevic V."/>
            <person name="Lee S.-M."/>
            <person name="Levine A."/>
            <person name="Liu H."/>
            <person name="Masuda S."/>
            <person name="Mauel C."/>
            <person name="Medigue C."/>
            <person name="Medina N."/>
            <person name="Mellado R.P."/>
            <person name="Mizuno M."/>
            <person name="Moestl D."/>
            <person name="Nakai S."/>
            <person name="Noback M."/>
            <person name="Noone D."/>
            <person name="O'Reilly M."/>
            <person name="Ogawa K."/>
            <person name="Ogiwara A."/>
            <person name="Oudega B."/>
            <person name="Park S.-H."/>
            <person name="Parro V."/>
            <person name="Pohl T.M."/>
            <person name="Portetelle D."/>
            <person name="Porwollik S."/>
            <person name="Prescott A.M."/>
            <person name="Presecan E."/>
            <person name="Pujic P."/>
            <person name="Purnelle B."/>
            <person name="Rapoport G."/>
            <person name="Rey M."/>
            <person name="Reynolds S."/>
            <person name="Rieger M."/>
            <person name="Rivolta C."/>
            <person name="Rocha E."/>
            <person name="Roche B."/>
            <person name="Rose M."/>
            <person name="Sadaie Y."/>
            <person name="Sato T."/>
            <person name="Scanlan E."/>
            <person name="Schleich S."/>
            <person name="Schroeter R."/>
            <person name="Scoffone F."/>
            <person name="Sekiguchi J."/>
            <person name="Sekowska A."/>
            <person name="Seror S.J."/>
            <person name="Serror P."/>
            <person name="Shin B.-S."/>
            <person name="Soldo B."/>
            <person name="Sorokin A."/>
            <person name="Tacconi E."/>
            <person name="Takagi T."/>
            <person name="Takahashi H."/>
            <person name="Takemaru K."/>
            <person name="Takeuchi M."/>
            <person name="Tamakoshi A."/>
            <person name="Tanaka T."/>
            <person name="Terpstra P."/>
            <person name="Tognoni A."/>
            <person name="Tosato V."/>
            <person name="Uchiyama S."/>
            <person name="Vandenbol M."/>
            <person name="Vannier F."/>
            <person name="Vassarotti A."/>
            <person name="Viari A."/>
            <person name="Wambutt R."/>
            <person name="Wedler E."/>
            <person name="Wedler H."/>
            <person name="Weitzenegger T."/>
            <person name="Winters P."/>
            <person name="Wipat A."/>
            <person name="Yamamoto H."/>
            <person name="Yamane K."/>
            <person name="Yasumoto K."/>
            <person name="Yata K."/>
            <person name="Yoshida K."/>
            <person name="Yoshikawa H.-F."/>
            <person name="Zumstein E."/>
            <person name="Yoshikawa H."/>
            <person name="Danchin A."/>
        </authorList>
    </citation>
    <scope>NUCLEOTIDE SEQUENCE [LARGE SCALE GENOMIC DNA]</scope>
    <source>
        <strain>168</strain>
    </source>
</reference>
<reference key="2">
    <citation type="journal article" date="1997" name="J. Bacteriol.">
        <title>Negative regulation of L-arabinose metabolism in Bacillus subtilis: characterization of the araR (araC) gene.</title>
        <authorList>
            <person name="Sa-Nogueira I.M.G."/>
            <person name="Mota L.J."/>
        </authorList>
    </citation>
    <scope>NUCLEOTIDE SEQUENCE [GENOMIC DNA] OF 1-223</scope>
    <source>
        <strain>168</strain>
    </source>
</reference>
<reference key="3">
    <citation type="journal article" date="1997" name="J. Bacteriol.">
        <title>Cloning, functional analysis, and transcriptional regulation of the Bacillus subtilis araE gene involved in L-arabinose utilization.</title>
        <authorList>
            <person name="Sa-Nogueira I."/>
            <person name="Ramos S.S."/>
        </authorList>
    </citation>
    <scope>NUCLEOTIDE SEQUENCE [GENOMIC DNA] OF 223-464</scope>
    <scope>FUNCTION</scope>
    <source>
        <strain>168</strain>
    </source>
</reference>
<reference key="4">
    <citation type="journal article" date="1998" name="J. Bacteriol.">
        <title>The Bacillus subtilis AraE protein displays a broad substrate specificity for several different sugars.</title>
        <authorList>
            <person name="Krispin O."/>
            <person name="Allmansberger R."/>
        </authorList>
    </citation>
    <scope>FUNCTION IN D-GALACTOSE AND D-XYLOSE IMPORT</scope>
</reference>
<reference key="5">
    <citation type="journal article" date="1999" name="Mol. Microbiol.">
        <title>Mode of action of AraR, the key regulator of L-arabinose metabolism in Bacillus subtilis.</title>
        <authorList>
            <person name="Mota L.J."/>
            <person name="Tavares P."/>
            <person name="Sa-Nogueira I.M.G."/>
        </authorList>
    </citation>
    <scope>TRANSCRIPTIONAL REGULATION</scope>
</reference>
<reference key="6">
    <citation type="journal article" date="2010" name="J. Bacteriol.">
        <title>A multitask ATPase serving different ABC-type sugar importers in Bacillus subtilis.</title>
        <authorList>
            <person name="Ferreira M.J."/>
            <person name="Sa-Nogueira I.D."/>
        </authorList>
    </citation>
    <scope>FUNCTION</scope>
    <scope>DISRUPTION PHENOTYPE</scope>
</reference>
<comment type="function">
    <text evidence="3 4 5">Uptake of L-arabinose across the cytoplasmic membrane with the concomitant transport of protons into the cell (symport system) (PubMed:9401028). In the presence of inducing amounts of L-arabinose, can import both D-galactose and D-xylose (PubMed:9620981). Can also transport the disaccharide alpha-1,5-arabinobiose (PubMed:20693325).</text>
</comment>
<comment type="catalytic activity">
    <reaction evidence="7">
        <text>L-arabinose(in) + H(+)(in) = L-arabinose(out) + H(+)(out)</text>
        <dbReference type="Rhea" id="RHEA:28951"/>
        <dbReference type="ChEBI" id="CHEBI:15378"/>
        <dbReference type="ChEBI" id="CHEBI:17535"/>
    </reaction>
    <physiologicalReaction direction="right-to-left" evidence="7">
        <dbReference type="Rhea" id="RHEA:28953"/>
    </physiologicalReaction>
</comment>
<comment type="catalytic activity">
    <reaction evidence="8">
        <text>D-galactose(in) + H(+)(in) = D-galactose(out) + H(+)(out)</text>
        <dbReference type="Rhea" id="RHEA:29019"/>
        <dbReference type="ChEBI" id="CHEBI:4139"/>
        <dbReference type="ChEBI" id="CHEBI:15378"/>
    </reaction>
    <physiologicalReaction direction="right-to-left" evidence="8">
        <dbReference type="Rhea" id="RHEA:29021"/>
    </physiologicalReaction>
</comment>
<comment type="catalytic activity">
    <reaction evidence="8">
        <text>D-xylose(in) + H(+)(in) = D-xylose(out) + H(+)(out)</text>
        <dbReference type="Rhea" id="RHEA:28959"/>
        <dbReference type="ChEBI" id="CHEBI:15378"/>
        <dbReference type="ChEBI" id="CHEBI:53455"/>
    </reaction>
    <physiologicalReaction direction="right-to-left" evidence="8">
        <dbReference type="Rhea" id="RHEA:28961"/>
    </physiologicalReaction>
</comment>
<comment type="subcellular location">
    <subcellularLocation>
        <location evidence="6">Cell membrane</location>
        <topology evidence="1">Multi-pass membrane protein</topology>
    </subcellularLocation>
</comment>
<comment type="induction">
    <text evidence="2">Transcription is repressed by the binding of AraR to the promoter. L-arabinose acts as an inducer by inhibiting the binding of AraR to the DNA, thus allowing expression of the gene.</text>
</comment>
<comment type="disruption phenotype">
    <text evidence="3">Deletion of the gene does not affect growth on glucose, but the mutant cannot grow in the presence of arabinose. Deletion has a negative effect on the ability of the mutant to grow on alpha-1,5-arabinobiose. AraE/araN double mutant is unable to grow in the presence of alpha-1,5-arabinobiose.</text>
</comment>
<comment type="similarity">
    <text evidence="6">Belongs to the major facilitator superfamily. Sugar transporter (TC 2.A.1.1) family.</text>
</comment>
<sequence length="464" mass="50411">MKNTPTQLEPNVPVTRSHSMGFVILISCAAGLGGLLYGYDTAVISGAIGFLKDLYSLSPFMEGLVISSIMIGGVVGVGISGFLSDRFGRRKILMTAALLFAISAIVSALSQDVSTLIIARIIGGLGIGMGSSLSVTYITEAAPPAIRGSLSSLYQLFTILGISATYFINLAVQRSGTYEWGVHTGWRWMLAYGMVPSVIFFLVLLVVPESPRWLAKAGKTNEALKILTRINGETVAKEELKNIENSLKIEQMGSLSQLFKPGLRKALVIGILLALFNQVIGMNAITYYGPEIFKMMGFGQNAGFVTTCIVGVVEVIFTVIAVLLIDKVGRKKLMSIGSAFMAIFMILIGTSFYFELTSGIMMIVLILGFVAAFCVSVGPITWIMISEIFPNHLRARAAGIATIFLWGANWAIGQFVPMMIDSFGLAYTFWIFAVINILCFLFVVTICPETKNKSLEEIEKLWIK</sequence>
<protein>
    <recommendedName>
        <fullName evidence="6">Arabinose-proton symporter</fullName>
    </recommendedName>
    <alternativeName>
        <fullName evidence="6">Arabinose transporter</fullName>
    </alternativeName>
</protein>
<evidence type="ECO:0000255" key="1"/>
<evidence type="ECO:0000269" key="2">
    <source>
    </source>
</evidence>
<evidence type="ECO:0000269" key="3">
    <source>
    </source>
</evidence>
<evidence type="ECO:0000269" key="4">
    <source>
    </source>
</evidence>
<evidence type="ECO:0000269" key="5">
    <source>
    </source>
</evidence>
<evidence type="ECO:0000305" key="6"/>
<evidence type="ECO:0000305" key="7">
    <source>
    </source>
</evidence>
<evidence type="ECO:0000305" key="8">
    <source>
    </source>
</evidence>